<comment type="function">
    <text evidence="1">Catalyzes the oxidation of 5,10-methylenetetrahydrofolate to 5,10-methenyltetrahydrofolate and then the hydrolysis of 5,10-methenyltetrahydrofolate to 10-formyltetrahydrofolate.</text>
</comment>
<comment type="catalytic activity">
    <reaction evidence="1">
        <text>(6R)-5,10-methylene-5,6,7,8-tetrahydrofolate + NADP(+) = (6R)-5,10-methenyltetrahydrofolate + NADPH</text>
        <dbReference type="Rhea" id="RHEA:22812"/>
        <dbReference type="ChEBI" id="CHEBI:15636"/>
        <dbReference type="ChEBI" id="CHEBI:57455"/>
        <dbReference type="ChEBI" id="CHEBI:57783"/>
        <dbReference type="ChEBI" id="CHEBI:58349"/>
        <dbReference type="EC" id="1.5.1.5"/>
    </reaction>
</comment>
<comment type="catalytic activity">
    <reaction evidence="1">
        <text>(6R)-5,10-methenyltetrahydrofolate + H2O = (6R)-10-formyltetrahydrofolate + H(+)</text>
        <dbReference type="Rhea" id="RHEA:23700"/>
        <dbReference type="ChEBI" id="CHEBI:15377"/>
        <dbReference type="ChEBI" id="CHEBI:15378"/>
        <dbReference type="ChEBI" id="CHEBI:57455"/>
        <dbReference type="ChEBI" id="CHEBI:195366"/>
        <dbReference type="EC" id="3.5.4.9"/>
    </reaction>
</comment>
<comment type="pathway">
    <text evidence="1">One-carbon metabolism; tetrahydrofolate interconversion.</text>
</comment>
<comment type="subunit">
    <text evidence="1">Homodimer.</text>
</comment>
<comment type="similarity">
    <text evidence="1">Belongs to the tetrahydrofolate dehydrogenase/cyclohydrolase family.</text>
</comment>
<name>FOLD_PARMW</name>
<keyword id="KW-0028">Amino-acid biosynthesis</keyword>
<keyword id="KW-0368">Histidine biosynthesis</keyword>
<keyword id="KW-0378">Hydrolase</keyword>
<keyword id="KW-0486">Methionine biosynthesis</keyword>
<keyword id="KW-0511">Multifunctional enzyme</keyword>
<keyword id="KW-0521">NADP</keyword>
<keyword id="KW-0554">One-carbon metabolism</keyword>
<keyword id="KW-0560">Oxidoreductase</keyword>
<keyword id="KW-0658">Purine biosynthesis</keyword>
<protein>
    <recommendedName>
        <fullName evidence="1">Bifunctional protein FolD</fullName>
    </recommendedName>
    <domain>
        <recommendedName>
            <fullName evidence="1">Methylenetetrahydrofolate dehydrogenase</fullName>
            <ecNumber evidence="1">1.5.1.5</ecNumber>
        </recommendedName>
    </domain>
    <domain>
        <recommendedName>
            <fullName evidence="1">Methenyltetrahydrofolate cyclohydrolase</fullName>
            <ecNumber evidence="1">3.5.4.9</ecNumber>
        </recommendedName>
    </domain>
</protein>
<sequence length="293" mass="30223">MALRLDGKALAATVERRLTSVVDAHSKTVGQPPGLAVLRVGDDPASAVYVANKEKACARVGIASYGAHLAADTPADQVLSTIQSLNADPRVDGILLQLPLPKGLDERPLLEAIDPEKDADGLHTLNLGRLLKGEPGPRSCTPAGVMALLRSNGIDPAGQRAVVIGRSILVGQPMALMLQAANATVTVAHSRTADLAAHTREADIVVVAAGRPGMVGAEHVRPGAAVVDVGIHRKPEGGLCGDVVAEEVEPIAAALSPVPGGVGPMTVTMLLVNTVVAWCRRHGIDHELDDLIG</sequence>
<organism>
    <name type="scientific">Parasynechococcus marenigrum (strain WH8102)</name>
    <dbReference type="NCBI Taxonomy" id="84588"/>
    <lineage>
        <taxon>Bacteria</taxon>
        <taxon>Bacillati</taxon>
        <taxon>Cyanobacteriota</taxon>
        <taxon>Cyanophyceae</taxon>
        <taxon>Synechococcales</taxon>
        <taxon>Prochlorococcaceae</taxon>
        <taxon>Parasynechococcus</taxon>
        <taxon>Parasynechococcus marenigrum</taxon>
    </lineage>
</organism>
<feature type="chain" id="PRO_0000268537" description="Bifunctional protein FolD">
    <location>
        <begin position="1"/>
        <end position="293"/>
    </location>
</feature>
<feature type="binding site" evidence="1">
    <location>
        <begin position="165"/>
        <end position="167"/>
    </location>
    <ligand>
        <name>NADP(+)</name>
        <dbReference type="ChEBI" id="CHEBI:58349"/>
    </ligand>
</feature>
<feature type="binding site" evidence="1">
    <location>
        <position position="190"/>
    </location>
    <ligand>
        <name>NADP(+)</name>
        <dbReference type="ChEBI" id="CHEBI:58349"/>
    </ligand>
</feature>
<feature type="binding site" evidence="1">
    <location>
        <position position="231"/>
    </location>
    <ligand>
        <name>NADP(+)</name>
        <dbReference type="ChEBI" id="CHEBI:58349"/>
    </ligand>
</feature>
<proteinExistence type="inferred from homology"/>
<dbReference type="EC" id="1.5.1.5" evidence="1"/>
<dbReference type="EC" id="3.5.4.9" evidence="1"/>
<dbReference type="EMBL" id="BX569691">
    <property type="protein sequence ID" value="CAE07255.1"/>
    <property type="molecule type" value="Genomic_DNA"/>
</dbReference>
<dbReference type="RefSeq" id="WP_011127605.1">
    <property type="nucleotide sequence ID" value="NC_005070.1"/>
</dbReference>
<dbReference type="SMR" id="Q7TTW4"/>
<dbReference type="STRING" id="84588.SYNW0740"/>
<dbReference type="KEGG" id="syw:SYNW0740"/>
<dbReference type="eggNOG" id="COG0190">
    <property type="taxonomic scope" value="Bacteria"/>
</dbReference>
<dbReference type="HOGENOM" id="CLU_034045_2_1_3"/>
<dbReference type="UniPathway" id="UPA00193"/>
<dbReference type="Proteomes" id="UP000001422">
    <property type="component" value="Chromosome"/>
</dbReference>
<dbReference type="GO" id="GO:0005829">
    <property type="term" value="C:cytosol"/>
    <property type="evidence" value="ECO:0007669"/>
    <property type="project" value="TreeGrafter"/>
</dbReference>
<dbReference type="GO" id="GO:0004477">
    <property type="term" value="F:methenyltetrahydrofolate cyclohydrolase activity"/>
    <property type="evidence" value="ECO:0007669"/>
    <property type="project" value="UniProtKB-UniRule"/>
</dbReference>
<dbReference type="GO" id="GO:0004488">
    <property type="term" value="F:methylenetetrahydrofolate dehydrogenase (NADP+) activity"/>
    <property type="evidence" value="ECO:0007669"/>
    <property type="project" value="UniProtKB-UniRule"/>
</dbReference>
<dbReference type="GO" id="GO:0000105">
    <property type="term" value="P:L-histidine biosynthetic process"/>
    <property type="evidence" value="ECO:0007669"/>
    <property type="project" value="UniProtKB-KW"/>
</dbReference>
<dbReference type="GO" id="GO:0009086">
    <property type="term" value="P:methionine biosynthetic process"/>
    <property type="evidence" value="ECO:0007669"/>
    <property type="project" value="UniProtKB-KW"/>
</dbReference>
<dbReference type="GO" id="GO:0006164">
    <property type="term" value="P:purine nucleotide biosynthetic process"/>
    <property type="evidence" value="ECO:0007669"/>
    <property type="project" value="UniProtKB-KW"/>
</dbReference>
<dbReference type="GO" id="GO:0035999">
    <property type="term" value="P:tetrahydrofolate interconversion"/>
    <property type="evidence" value="ECO:0007669"/>
    <property type="project" value="UniProtKB-UniRule"/>
</dbReference>
<dbReference type="CDD" id="cd01080">
    <property type="entry name" value="NAD_bind_m-THF_DH_Cyclohyd"/>
    <property type="match status" value="1"/>
</dbReference>
<dbReference type="FunFam" id="3.40.50.720:FF:000006">
    <property type="entry name" value="Bifunctional protein FolD"/>
    <property type="match status" value="1"/>
</dbReference>
<dbReference type="FunFam" id="3.40.50.10860:FF:000005">
    <property type="entry name" value="C-1-tetrahydrofolate synthase, cytoplasmic, putative"/>
    <property type="match status" value="1"/>
</dbReference>
<dbReference type="Gene3D" id="3.40.50.10860">
    <property type="entry name" value="Leucine Dehydrogenase, chain A, domain 1"/>
    <property type="match status" value="1"/>
</dbReference>
<dbReference type="Gene3D" id="3.40.50.720">
    <property type="entry name" value="NAD(P)-binding Rossmann-like Domain"/>
    <property type="match status" value="1"/>
</dbReference>
<dbReference type="HAMAP" id="MF_01576">
    <property type="entry name" value="THF_DHG_CYH"/>
    <property type="match status" value="1"/>
</dbReference>
<dbReference type="InterPro" id="IPR046346">
    <property type="entry name" value="Aminoacid_DH-like_N_sf"/>
</dbReference>
<dbReference type="InterPro" id="IPR036291">
    <property type="entry name" value="NAD(P)-bd_dom_sf"/>
</dbReference>
<dbReference type="InterPro" id="IPR000672">
    <property type="entry name" value="THF_DH/CycHdrlase"/>
</dbReference>
<dbReference type="InterPro" id="IPR020630">
    <property type="entry name" value="THF_DH/CycHdrlase_cat_dom"/>
</dbReference>
<dbReference type="InterPro" id="IPR020867">
    <property type="entry name" value="THF_DH/CycHdrlase_CS"/>
</dbReference>
<dbReference type="InterPro" id="IPR020631">
    <property type="entry name" value="THF_DH/CycHdrlase_NAD-bd_dom"/>
</dbReference>
<dbReference type="NCBIfam" id="NF010783">
    <property type="entry name" value="PRK14186.1"/>
    <property type="match status" value="1"/>
</dbReference>
<dbReference type="PANTHER" id="PTHR48099:SF5">
    <property type="entry name" value="C-1-TETRAHYDROFOLATE SYNTHASE, CYTOPLASMIC"/>
    <property type="match status" value="1"/>
</dbReference>
<dbReference type="PANTHER" id="PTHR48099">
    <property type="entry name" value="C-1-TETRAHYDROFOLATE SYNTHASE, CYTOPLASMIC-RELATED"/>
    <property type="match status" value="1"/>
</dbReference>
<dbReference type="Pfam" id="PF00763">
    <property type="entry name" value="THF_DHG_CYH"/>
    <property type="match status" value="1"/>
</dbReference>
<dbReference type="Pfam" id="PF02882">
    <property type="entry name" value="THF_DHG_CYH_C"/>
    <property type="match status" value="1"/>
</dbReference>
<dbReference type="PRINTS" id="PR00085">
    <property type="entry name" value="THFDHDRGNASE"/>
</dbReference>
<dbReference type="SUPFAM" id="SSF53223">
    <property type="entry name" value="Aminoacid dehydrogenase-like, N-terminal domain"/>
    <property type="match status" value="1"/>
</dbReference>
<dbReference type="SUPFAM" id="SSF51735">
    <property type="entry name" value="NAD(P)-binding Rossmann-fold domains"/>
    <property type="match status" value="1"/>
</dbReference>
<dbReference type="PROSITE" id="PS00767">
    <property type="entry name" value="THF_DHG_CYH_2"/>
    <property type="match status" value="1"/>
</dbReference>
<evidence type="ECO:0000255" key="1">
    <source>
        <dbReference type="HAMAP-Rule" id="MF_01576"/>
    </source>
</evidence>
<reference key="1">
    <citation type="journal article" date="2003" name="Nature">
        <title>The genome of a motile marine Synechococcus.</title>
        <authorList>
            <person name="Palenik B."/>
            <person name="Brahamsha B."/>
            <person name="Larimer F.W."/>
            <person name="Land M.L."/>
            <person name="Hauser L."/>
            <person name="Chain P."/>
            <person name="Lamerdin J.E."/>
            <person name="Regala W."/>
            <person name="Allen E.E."/>
            <person name="McCarren J."/>
            <person name="Paulsen I.T."/>
            <person name="Dufresne A."/>
            <person name="Partensky F."/>
            <person name="Webb E.A."/>
            <person name="Waterbury J."/>
        </authorList>
    </citation>
    <scope>NUCLEOTIDE SEQUENCE [LARGE SCALE GENOMIC DNA]</scope>
    <source>
        <strain>WH8102</strain>
    </source>
</reference>
<accession>Q7TTW4</accession>
<gene>
    <name evidence="1" type="primary">folD</name>
    <name type="ordered locus">SYNW0740</name>
</gene>